<accession>P0CZ42</accession>
<accession>Q79YI4</accession>
<accession>Q7CFG9</accession>
<organism>
    <name type="scientific">Streptococcus pyogenes serotype M3 (strain ATCC BAA-595 / MGAS315)</name>
    <dbReference type="NCBI Taxonomy" id="198466"/>
    <lineage>
        <taxon>Bacteria</taxon>
        <taxon>Bacillati</taxon>
        <taxon>Bacillota</taxon>
        <taxon>Bacilli</taxon>
        <taxon>Lactobacillales</taxon>
        <taxon>Streptococcaceae</taxon>
        <taxon>Streptococcus</taxon>
    </lineage>
</organism>
<evidence type="ECO:0000250" key="1"/>
<evidence type="ECO:0000255" key="2">
    <source>
        <dbReference type="PROSITE-ProRule" id="PRU00434"/>
    </source>
</evidence>
<evidence type="ECO:0000305" key="3"/>
<protein>
    <recommendedName>
        <fullName>Probable ABC transporter ATP-binding protein SpyM3_0208</fullName>
    </recommendedName>
</protein>
<name>Y208_STRP3</name>
<comment type="subcellular location">
    <subcellularLocation>
        <location evidence="1">Cell membrane</location>
        <topology evidence="1">Peripheral membrane protein</topology>
    </subcellularLocation>
</comment>
<comment type="similarity">
    <text evidence="3">Belongs to the ABC transporter superfamily. Ycf16 family.</text>
</comment>
<sequence length="256" mass="28110">MSILEINNLHVSIEGKEILKGVNLTLKTGEVAAIMGPNGTGKSTLSAAIMGNPNYEVTQGQILLDGVNILDLEVDERARLGLFLAMQYPSEIPGITNAEFMRAAMNAGKADEDKISVRDFITKLDEKMALLGMKEEMAERYLNEGFSGGEKKRNEILQLLMLEPKFALLDEIDSGLDIDALKVVSKGVNEMRGKDFGAMIITHYQRLLNYITPDLVHVMMDGRIVLSGDAALATRLEKEGYAGIAQDLGIEYKEES</sequence>
<feature type="chain" id="PRO_0000093213" description="Probable ABC transporter ATP-binding protein SpyM3_0208">
    <location>
        <begin position="1"/>
        <end position="256"/>
    </location>
</feature>
<feature type="domain" description="ABC transporter" evidence="2">
    <location>
        <begin position="4"/>
        <end position="246"/>
    </location>
</feature>
<feature type="binding site" evidence="2">
    <location>
        <begin position="36"/>
        <end position="43"/>
    </location>
    <ligand>
        <name>ATP</name>
        <dbReference type="ChEBI" id="CHEBI:30616"/>
    </ligand>
</feature>
<proteinExistence type="inferred from homology"/>
<keyword id="KW-0067">ATP-binding</keyword>
<keyword id="KW-1003">Cell membrane</keyword>
<keyword id="KW-0472">Membrane</keyword>
<keyword id="KW-0547">Nucleotide-binding</keyword>
<keyword id="KW-0813">Transport</keyword>
<reference key="1">
    <citation type="journal article" date="2002" name="Proc. Natl. Acad. Sci. U.S.A.">
        <title>Genome sequence of a serotype M3 strain of group A Streptococcus: phage-encoded toxins, the high-virulence phenotype, and clone emergence.</title>
        <authorList>
            <person name="Beres S.B."/>
            <person name="Sylva G.L."/>
            <person name="Barbian K.D."/>
            <person name="Lei B."/>
            <person name="Hoff J.S."/>
            <person name="Mammarella N.D."/>
            <person name="Liu M.-Y."/>
            <person name="Smoot J.C."/>
            <person name="Porcella S.F."/>
            <person name="Parkins L.D."/>
            <person name="Campbell D.S."/>
            <person name="Smith T.M."/>
            <person name="McCormick J.K."/>
            <person name="Leung D.Y.M."/>
            <person name="Schlievert P.M."/>
            <person name="Musser J.M."/>
        </authorList>
    </citation>
    <scope>NUCLEOTIDE SEQUENCE [LARGE SCALE GENOMIC DNA]</scope>
    <source>
        <strain>ATCC BAA-595 / MGAS315</strain>
    </source>
</reference>
<dbReference type="EMBL" id="AE014074">
    <property type="protein sequence ID" value="AAM78815.1"/>
    <property type="molecule type" value="Genomic_DNA"/>
</dbReference>
<dbReference type="SMR" id="P0CZ42"/>
<dbReference type="KEGG" id="spg:SpyM3_0208"/>
<dbReference type="HOGENOM" id="CLU_000604_48_1_9"/>
<dbReference type="Proteomes" id="UP000000564">
    <property type="component" value="Chromosome"/>
</dbReference>
<dbReference type="GO" id="GO:0005886">
    <property type="term" value="C:plasma membrane"/>
    <property type="evidence" value="ECO:0007669"/>
    <property type="project" value="UniProtKB-SubCell"/>
</dbReference>
<dbReference type="GO" id="GO:0005524">
    <property type="term" value="F:ATP binding"/>
    <property type="evidence" value="ECO:0007669"/>
    <property type="project" value="UniProtKB-KW"/>
</dbReference>
<dbReference type="GO" id="GO:0016887">
    <property type="term" value="F:ATP hydrolysis activity"/>
    <property type="evidence" value="ECO:0007669"/>
    <property type="project" value="InterPro"/>
</dbReference>
<dbReference type="CDD" id="cd03217">
    <property type="entry name" value="ABC_FeS_Assembly"/>
    <property type="match status" value="1"/>
</dbReference>
<dbReference type="Gene3D" id="3.40.50.300">
    <property type="entry name" value="P-loop containing nucleotide triphosphate hydrolases"/>
    <property type="match status" value="1"/>
</dbReference>
<dbReference type="InterPro" id="IPR003593">
    <property type="entry name" value="AAA+_ATPase"/>
</dbReference>
<dbReference type="InterPro" id="IPR003439">
    <property type="entry name" value="ABC_transporter-like_ATP-bd"/>
</dbReference>
<dbReference type="InterPro" id="IPR017871">
    <property type="entry name" value="ABC_transporter-like_CS"/>
</dbReference>
<dbReference type="InterPro" id="IPR010230">
    <property type="entry name" value="FeS-cluster_ATPase_SufC"/>
</dbReference>
<dbReference type="InterPro" id="IPR027417">
    <property type="entry name" value="P-loop_NTPase"/>
</dbReference>
<dbReference type="NCBIfam" id="TIGR01978">
    <property type="entry name" value="sufC"/>
    <property type="match status" value="1"/>
</dbReference>
<dbReference type="PANTHER" id="PTHR43204">
    <property type="entry name" value="ABC TRANSPORTER I FAMILY MEMBER 6, CHLOROPLASTIC"/>
    <property type="match status" value="1"/>
</dbReference>
<dbReference type="PANTHER" id="PTHR43204:SF1">
    <property type="entry name" value="ABC TRANSPORTER I FAMILY MEMBER 6, CHLOROPLASTIC"/>
    <property type="match status" value="1"/>
</dbReference>
<dbReference type="Pfam" id="PF00005">
    <property type="entry name" value="ABC_tran"/>
    <property type="match status" value="1"/>
</dbReference>
<dbReference type="SMART" id="SM00382">
    <property type="entry name" value="AAA"/>
    <property type="match status" value="1"/>
</dbReference>
<dbReference type="SUPFAM" id="SSF52540">
    <property type="entry name" value="P-loop containing nucleoside triphosphate hydrolases"/>
    <property type="match status" value="1"/>
</dbReference>
<dbReference type="PROSITE" id="PS00211">
    <property type="entry name" value="ABC_TRANSPORTER_1"/>
    <property type="match status" value="1"/>
</dbReference>
<dbReference type="PROSITE" id="PS50893">
    <property type="entry name" value="ABC_TRANSPORTER_2"/>
    <property type="match status" value="1"/>
</dbReference>
<gene>
    <name type="ordered locus">SpyM3_0208</name>
</gene>